<reference key="1">
    <citation type="journal article" date="2002" name="Mol. Microbiol.">
        <title>Genome sequence of Streptococcus agalactiae, a pathogen causing invasive neonatal disease.</title>
        <authorList>
            <person name="Glaser P."/>
            <person name="Rusniok C."/>
            <person name="Buchrieser C."/>
            <person name="Chevalier F."/>
            <person name="Frangeul L."/>
            <person name="Msadek T."/>
            <person name="Zouine M."/>
            <person name="Couve E."/>
            <person name="Lalioui L."/>
            <person name="Poyart C."/>
            <person name="Trieu-Cuot P."/>
            <person name="Kunst F."/>
        </authorList>
    </citation>
    <scope>NUCLEOTIDE SEQUENCE [LARGE SCALE GENOMIC DNA]</scope>
    <source>
        <strain>NEM316</strain>
    </source>
</reference>
<name>PSTS1_STRA3</name>
<organism>
    <name type="scientific">Streptococcus agalactiae serotype III (strain NEM316)</name>
    <dbReference type="NCBI Taxonomy" id="211110"/>
    <lineage>
        <taxon>Bacteria</taxon>
        <taxon>Bacillati</taxon>
        <taxon>Bacillota</taxon>
        <taxon>Bacilli</taxon>
        <taxon>Lactobacillales</taxon>
        <taxon>Streptococcaceae</taxon>
        <taxon>Streptococcus</taxon>
    </lineage>
</organism>
<accession>Q8E5K2</accession>
<dbReference type="EMBL" id="AL766848">
    <property type="protein sequence ID" value="CAD46686.1"/>
    <property type="molecule type" value="Genomic_DNA"/>
</dbReference>
<dbReference type="RefSeq" id="WP_001873504.1">
    <property type="nucleotide sequence ID" value="NC_004368.1"/>
</dbReference>
<dbReference type="SMR" id="Q8E5K2"/>
<dbReference type="KEGG" id="san:gbs1027"/>
<dbReference type="eggNOG" id="COG0226">
    <property type="taxonomic scope" value="Bacteria"/>
</dbReference>
<dbReference type="HOGENOM" id="CLU_026228_5_0_9"/>
<dbReference type="Proteomes" id="UP000000823">
    <property type="component" value="Chromosome"/>
</dbReference>
<dbReference type="GO" id="GO:0005886">
    <property type="term" value="C:plasma membrane"/>
    <property type="evidence" value="ECO:0007669"/>
    <property type="project" value="UniProtKB-SubCell"/>
</dbReference>
<dbReference type="GO" id="GO:0042301">
    <property type="term" value="F:phosphate ion binding"/>
    <property type="evidence" value="ECO:0007669"/>
    <property type="project" value="InterPro"/>
</dbReference>
<dbReference type="GO" id="GO:0006817">
    <property type="term" value="P:phosphate ion transport"/>
    <property type="evidence" value="ECO:0007669"/>
    <property type="project" value="UniProtKB-KW"/>
</dbReference>
<dbReference type="CDD" id="cd13653">
    <property type="entry name" value="PBP2_phosphate_like_1"/>
    <property type="match status" value="1"/>
</dbReference>
<dbReference type="FunFam" id="3.40.190.10:FF:000107">
    <property type="entry name" value="Phosphate ABC transporter, phosphate-binding protein"/>
    <property type="match status" value="1"/>
</dbReference>
<dbReference type="Gene3D" id="3.40.190.10">
    <property type="entry name" value="Periplasmic binding protein-like II"/>
    <property type="match status" value="2"/>
</dbReference>
<dbReference type="InterPro" id="IPR024370">
    <property type="entry name" value="PBP_domain"/>
</dbReference>
<dbReference type="InterPro" id="IPR011862">
    <property type="entry name" value="Phos-bd"/>
</dbReference>
<dbReference type="InterPro" id="IPR050811">
    <property type="entry name" value="Phosphate_ABC_transporter"/>
</dbReference>
<dbReference type="NCBIfam" id="TIGR02136">
    <property type="entry name" value="ptsS_2"/>
    <property type="match status" value="1"/>
</dbReference>
<dbReference type="PANTHER" id="PTHR30570">
    <property type="entry name" value="PERIPLASMIC PHOSPHATE BINDING COMPONENT OF PHOSPHATE ABC TRANSPORTER"/>
    <property type="match status" value="1"/>
</dbReference>
<dbReference type="PANTHER" id="PTHR30570:SF4">
    <property type="entry name" value="PHOSPHATE-BINDING PROTEIN PSTS 1"/>
    <property type="match status" value="1"/>
</dbReference>
<dbReference type="Pfam" id="PF12849">
    <property type="entry name" value="PBP_like_2"/>
    <property type="match status" value="1"/>
</dbReference>
<dbReference type="SUPFAM" id="SSF53850">
    <property type="entry name" value="Periplasmic binding protein-like II"/>
    <property type="match status" value="1"/>
</dbReference>
<dbReference type="PROSITE" id="PS51257">
    <property type="entry name" value="PROKAR_LIPOPROTEIN"/>
    <property type="match status" value="1"/>
</dbReference>
<gene>
    <name type="primary">pstS1</name>
    <name type="ordered locus">gbs1027</name>
</gene>
<sequence length="288" mass="30948">MKMKKNIFLLTLLATVLLTLSGCANWIDKGQSITSVGSTALQPLVEAAADEFGKTNLGKTINVQGGGSGTGLSQVQSGAVQIGNSDLFAEEKDGIDAKKLKDHQVAVAGLAVIVNKKVNVKNLTTHQLRDIFAGKIKNWKEVGGQDLDISIINRAASSGSRATFDNTIMGNVAPIQSQEQDSNGMVKSIVSQTPGAISYLAFAYVDKSVGTLKLNGFAPTAKNVTTDNWKLWSYEHMYTKGNETGLTKEFLDYMKSDKVQSSIVQHMGYISINDMKVVKDAEGKVTPK</sequence>
<protein>
    <recommendedName>
        <fullName>Phosphate-binding protein PstS 1</fullName>
        <shortName>PBP 1</shortName>
    </recommendedName>
</protein>
<keyword id="KW-1003">Cell membrane</keyword>
<keyword id="KW-0449">Lipoprotein</keyword>
<keyword id="KW-0472">Membrane</keyword>
<keyword id="KW-0564">Palmitate</keyword>
<keyword id="KW-0592">Phosphate transport</keyword>
<keyword id="KW-0732">Signal</keyword>
<keyword id="KW-0813">Transport</keyword>
<evidence type="ECO:0000250" key="1"/>
<evidence type="ECO:0000255" key="2">
    <source>
        <dbReference type="PROSITE-ProRule" id="PRU00303"/>
    </source>
</evidence>
<evidence type="ECO:0000305" key="3"/>
<comment type="function">
    <text evidence="1">Part of the ABC transporter complex PstSACB involved in phosphate import.</text>
</comment>
<comment type="subunit">
    <text evidence="3">The complex is composed of two ATP-binding proteins (PstB), two transmembrane proteins (PstC and PstA) and a solute-binding protein (PstS).</text>
</comment>
<comment type="subcellular location">
    <subcellularLocation>
        <location evidence="3">Cell membrane</location>
        <topology evidence="3">Lipid-anchor</topology>
    </subcellularLocation>
</comment>
<comment type="similarity">
    <text evidence="3">Belongs to the PstS family.</text>
</comment>
<proteinExistence type="inferred from homology"/>
<feature type="signal peptide" evidence="2">
    <location>
        <begin position="1"/>
        <end position="22"/>
    </location>
</feature>
<feature type="chain" id="PRO_0000281666" description="Phosphate-binding protein PstS 1">
    <location>
        <begin position="23"/>
        <end position="288"/>
    </location>
</feature>
<feature type="lipid moiety-binding region" description="N-palmitoyl cysteine" evidence="2">
    <location>
        <position position="23"/>
    </location>
</feature>
<feature type="lipid moiety-binding region" description="S-diacylglycerol cysteine" evidence="2">
    <location>
        <position position="23"/>
    </location>
</feature>